<reference key="1">
    <citation type="submission" date="2008-04" db="EMBL/GenBank/DDBJ databases">
        <title>Complete sequence of Yersinia pseudotuberculosis PB1/+.</title>
        <authorList>
            <person name="Copeland A."/>
            <person name="Lucas S."/>
            <person name="Lapidus A."/>
            <person name="Glavina del Rio T."/>
            <person name="Dalin E."/>
            <person name="Tice H."/>
            <person name="Bruce D."/>
            <person name="Goodwin L."/>
            <person name="Pitluck S."/>
            <person name="Munk A.C."/>
            <person name="Brettin T."/>
            <person name="Detter J.C."/>
            <person name="Han C."/>
            <person name="Tapia R."/>
            <person name="Schmutz J."/>
            <person name="Larimer F."/>
            <person name="Land M."/>
            <person name="Hauser L."/>
            <person name="Challacombe J.F."/>
            <person name="Green L."/>
            <person name="Lindler L.E."/>
            <person name="Nikolich M.P."/>
            <person name="Richardson P."/>
        </authorList>
    </citation>
    <scope>NUCLEOTIDE SEQUENCE [LARGE SCALE GENOMIC DNA]</scope>
    <source>
        <strain>PB1/+</strain>
    </source>
</reference>
<gene>
    <name evidence="1" type="primary">rpmG</name>
    <name type="ordered locus">YPTS_0050</name>
</gene>
<organism>
    <name type="scientific">Yersinia pseudotuberculosis serotype IB (strain PB1/+)</name>
    <dbReference type="NCBI Taxonomy" id="502801"/>
    <lineage>
        <taxon>Bacteria</taxon>
        <taxon>Pseudomonadati</taxon>
        <taxon>Pseudomonadota</taxon>
        <taxon>Gammaproteobacteria</taxon>
        <taxon>Enterobacterales</taxon>
        <taxon>Yersiniaceae</taxon>
        <taxon>Yersinia</taxon>
    </lineage>
</organism>
<dbReference type="EMBL" id="CP001048">
    <property type="protein sequence ID" value="ACC87049.1"/>
    <property type="molecule type" value="Genomic_DNA"/>
</dbReference>
<dbReference type="RefSeq" id="WP_002208990.1">
    <property type="nucleotide sequence ID" value="NZ_CP009780.1"/>
</dbReference>
<dbReference type="SMR" id="B2JYN5"/>
<dbReference type="GeneID" id="96663532"/>
<dbReference type="KEGG" id="ypb:YPTS_0050"/>
<dbReference type="PATRIC" id="fig|502801.10.peg.3726"/>
<dbReference type="GO" id="GO:0022625">
    <property type="term" value="C:cytosolic large ribosomal subunit"/>
    <property type="evidence" value="ECO:0007669"/>
    <property type="project" value="TreeGrafter"/>
</dbReference>
<dbReference type="GO" id="GO:0003735">
    <property type="term" value="F:structural constituent of ribosome"/>
    <property type="evidence" value="ECO:0007669"/>
    <property type="project" value="InterPro"/>
</dbReference>
<dbReference type="GO" id="GO:0006412">
    <property type="term" value="P:translation"/>
    <property type="evidence" value="ECO:0007669"/>
    <property type="project" value="UniProtKB-UniRule"/>
</dbReference>
<dbReference type="FunFam" id="2.20.28.120:FF:000001">
    <property type="entry name" value="50S ribosomal protein L33"/>
    <property type="match status" value="1"/>
</dbReference>
<dbReference type="Gene3D" id="2.20.28.120">
    <property type="entry name" value="Ribosomal protein L33"/>
    <property type="match status" value="1"/>
</dbReference>
<dbReference type="HAMAP" id="MF_00294">
    <property type="entry name" value="Ribosomal_bL33"/>
    <property type="match status" value="1"/>
</dbReference>
<dbReference type="InterPro" id="IPR001705">
    <property type="entry name" value="Ribosomal_bL33"/>
</dbReference>
<dbReference type="InterPro" id="IPR018264">
    <property type="entry name" value="Ribosomal_bL33_CS"/>
</dbReference>
<dbReference type="InterPro" id="IPR038584">
    <property type="entry name" value="Ribosomal_bL33_sf"/>
</dbReference>
<dbReference type="InterPro" id="IPR011332">
    <property type="entry name" value="Ribosomal_zn-bd"/>
</dbReference>
<dbReference type="NCBIfam" id="NF001860">
    <property type="entry name" value="PRK00595.1"/>
    <property type="match status" value="1"/>
</dbReference>
<dbReference type="NCBIfam" id="TIGR01023">
    <property type="entry name" value="rpmG_bact"/>
    <property type="match status" value="1"/>
</dbReference>
<dbReference type="PANTHER" id="PTHR15238">
    <property type="entry name" value="54S RIBOSOMAL PROTEIN L39, MITOCHONDRIAL"/>
    <property type="match status" value="1"/>
</dbReference>
<dbReference type="PANTHER" id="PTHR15238:SF1">
    <property type="entry name" value="LARGE RIBOSOMAL SUBUNIT PROTEIN BL33M"/>
    <property type="match status" value="1"/>
</dbReference>
<dbReference type="Pfam" id="PF00471">
    <property type="entry name" value="Ribosomal_L33"/>
    <property type="match status" value="1"/>
</dbReference>
<dbReference type="SUPFAM" id="SSF57829">
    <property type="entry name" value="Zn-binding ribosomal proteins"/>
    <property type="match status" value="1"/>
</dbReference>
<dbReference type="PROSITE" id="PS00582">
    <property type="entry name" value="RIBOSOMAL_L33"/>
    <property type="match status" value="1"/>
</dbReference>
<keyword id="KW-0687">Ribonucleoprotein</keyword>
<keyword id="KW-0689">Ribosomal protein</keyword>
<sequence length="55" mass="6358">MAKGVREKIKLVSSAGTGHFYTTTKNKRTKPEKLELKKFDPVVRQHVLYKEAKIK</sequence>
<protein>
    <recommendedName>
        <fullName evidence="1">Large ribosomal subunit protein bL33</fullName>
    </recommendedName>
    <alternativeName>
        <fullName evidence="2">50S ribosomal protein L33</fullName>
    </alternativeName>
</protein>
<name>RL33_YERPB</name>
<feature type="chain" id="PRO_1000115168" description="Large ribosomal subunit protein bL33">
    <location>
        <begin position="1"/>
        <end position="55"/>
    </location>
</feature>
<evidence type="ECO:0000255" key="1">
    <source>
        <dbReference type="HAMAP-Rule" id="MF_00294"/>
    </source>
</evidence>
<evidence type="ECO:0000305" key="2"/>
<comment type="similarity">
    <text evidence="1">Belongs to the bacterial ribosomal protein bL33 family.</text>
</comment>
<accession>B2JYN5</accession>
<proteinExistence type="inferred from homology"/>